<dbReference type="EMBL" id="Z26877">
    <property type="protein sequence ID" value="CAA81494.1"/>
    <property type="molecule type" value="Genomic_DNA"/>
</dbReference>
<dbReference type="EMBL" id="Z28160">
    <property type="protein sequence ID" value="CAA82002.1"/>
    <property type="molecule type" value="Genomic_DNA"/>
</dbReference>
<dbReference type="EMBL" id="AY558355">
    <property type="protein sequence ID" value="AAS56681.1"/>
    <property type="molecule type" value="Genomic_DNA"/>
</dbReference>
<dbReference type="EMBL" id="BK006944">
    <property type="protein sequence ID" value="DAA09005.1"/>
    <property type="molecule type" value="Genomic_DNA"/>
</dbReference>
<dbReference type="PIR" id="S37791">
    <property type="entry name" value="S37791"/>
</dbReference>
<dbReference type="RefSeq" id="NP_012762.1">
    <property type="nucleotide sequence ID" value="NM_001179726.1"/>
</dbReference>
<dbReference type="PDB" id="8RAM">
    <property type="method" value="EM"/>
    <property type="resolution" value="2.80 A"/>
    <property type="chains" value="M=1-145"/>
</dbReference>
<dbReference type="PDB" id="8RAP">
    <property type="method" value="EM"/>
    <property type="resolution" value="4.30 A"/>
    <property type="chains" value="M=1-145"/>
</dbReference>
<dbReference type="PDB" id="8TVY">
    <property type="method" value="EM"/>
    <property type="resolution" value="3.10 A"/>
    <property type="chains" value="O=1-85"/>
</dbReference>
<dbReference type="PDBsum" id="8RAM"/>
<dbReference type="PDBsum" id="8RAP"/>
<dbReference type="PDBsum" id="8TVY"/>
<dbReference type="EMDB" id="EMD-19019"/>
<dbReference type="EMDB" id="EMD-19022"/>
<dbReference type="SMR" id="P36053"/>
<dbReference type="BioGRID" id="33978">
    <property type="interactions" value="402"/>
</dbReference>
<dbReference type="DIP" id="DIP-2119N"/>
<dbReference type="FunCoup" id="P36053">
    <property type="interactions" value="804"/>
</dbReference>
<dbReference type="IntAct" id="P36053">
    <property type="interactions" value="19"/>
</dbReference>
<dbReference type="MINT" id="P36053"/>
<dbReference type="STRING" id="4932.YKL160W"/>
<dbReference type="iPTMnet" id="P36053"/>
<dbReference type="PaxDb" id="4932-YKL160W"/>
<dbReference type="PeptideAtlas" id="P36053"/>
<dbReference type="EnsemblFungi" id="YKL160W_mRNA">
    <property type="protein sequence ID" value="YKL160W"/>
    <property type="gene ID" value="YKL160W"/>
</dbReference>
<dbReference type="GeneID" id="853697"/>
<dbReference type="KEGG" id="sce:YKL160W"/>
<dbReference type="AGR" id="SGD:S000001643"/>
<dbReference type="SGD" id="S000001643">
    <property type="gene designation" value="ELF1"/>
</dbReference>
<dbReference type="VEuPathDB" id="FungiDB:YKL160W"/>
<dbReference type="eggNOG" id="KOG3214">
    <property type="taxonomic scope" value="Eukaryota"/>
</dbReference>
<dbReference type="GeneTree" id="ENSGT00390000000053"/>
<dbReference type="HOGENOM" id="CLU_105983_0_3_1"/>
<dbReference type="InParanoid" id="P36053"/>
<dbReference type="OMA" id="HEKSITC"/>
<dbReference type="OrthoDB" id="445983at2759"/>
<dbReference type="BioCyc" id="YEAST:G3O-31928-MONOMER"/>
<dbReference type="BioGRID-ORCS" id="853697">
    <property type="hits" value="2 hits in 10 CRISPR screens"/>
</dbReference>
<dbReference type="PRO" id="PR:P36053"/>
<dbReference type="Proteomes" id="UP000002311">
    <property type="component" value="Chromosome XI"/>
</dbReference>
<dbReference type="RNAct" id="P36053">
    <property type="molecule type" value="protein"/>
</dbReference>
<dbReference type="GO" id="GO:0005634">
    <property type="term" value="C:nucleus"/>
    <property type="evidence" value="ECO:0000314"/>
    <property type="project" value="SGD"/>
</dbReference>
<dbReference type="GO" id="GO:0008023">
    <property type="term" value="C:transcription elongation factor complex"/>
    <property type="evidence" value="ECO:0000314"/>
    <property type="project" value="SGD"/>
</dbReference>
<dbReference type="GO" id="GO:0000993">
    <property type="term" value="F:RNA polymerase II complex binding"/>
    <property type="evidence" value="ECO:0000314"/>
    <property type="project" value="SGD"/>
</dbReference>
<dbReference type="GO" id="GO:0008270">
    <property type="term" value="F:zinc ion binding"/>
    <property type="evidence" value="ECO:0007669"/>
    <property type="project" value="UniProtKB-KW"/>
</dbReference>
<dbReference type="GO" id="GO:0006368">
    <property type="term" value="P:transcription elongation by RNA polymerase II"/>
    <property type="evidence" value="ECO:0000315"/>
    <property type="project" value="SGD"/>
</dbReference>
<dbReference type="GO" id="GO:0045815">
    <property type="term" value="P:transcription initiation-coupled chromatin remodeling"/>
    <property type="evidence" value="ECO:0000315"/>
    <property type="project" value="SGD"/>
</dbReference>
<dbReference type="FunFam" id="2.20.25.190:FF:000001">
    <property type="entry name" value="Transcription elongation factor 1 homolog"/>
    <property type="match status" value="1"/>
</dbReference>
<dbReference type="Gene3D" id="2.20.25.190">
    <property type="match status" value="1"/>
</dbReference>
<dbReference type="InterPro" id="IPR007808">
    <property type="entry name" value="Elf1"/>
</dbReference>
<dbReference type="InterPro" id="IPR038567">
    <property type="entry name" value="T_Elf1_sf"/>
</dbReference>
<dbReference type="PANTHER" id="PTHR20934">
    <property type="entry name" value="TRANSCRIPTION ELONGATION FACTOR 1 HOMOLOG"/>
    <property type="match status" value="1"/>
</dbReference>
<dbReference type="PANTHER" id="PTHR20934:SF0">
    <property type="entry name" value="TRANSCRIPTION ELONGATION FACTOR 1 HOMOLOG"/>
    <property type="match status" value="1"/>
</dbReference>
<dbReference type="Pfam" id="PF05129">
    <property type="entry name" value="Zn_ribbon_Elf1"/>
    <property type="match status" value="1"/>
</dbReference>
<dbReference type="SUPFAM" id="SSF57783">
    <property type="entry name" value="Zinc beta-ribbon"/>
    <property type="match status" value="1"/>
</dbReference>
<organism>
    <name type="scientific">Saccharomyces cerevisiae (strain ATCC 204508 / S288c)</name>
    <name type="common">Baker's yeast</name>
    <dbReference type="NCBI Taxonomy" id="559292"/>
    <lineage>
        <taxon>Eukaryota</taxon>
        <taxon>Fungi</taxon>
        <taxon>Dikarya</taxon>
        <taxon>Ascomycota</taxon>
        <taxon>Saccharomycotina</taxon>
        <taxon>Saccharomycetes</taxon>
        <taxon>Saccharomycetales</taxon>
        <taxon>Saccharomycetaceae</taxon>
        <taxon>Saccharomyces</taxon>
    </lineage>
</organism>
<keyword id="KW-0002">3D-structure</keyword>
<keyword id="KW-0479">Metal-binding</keyword>
<keyword id="KW-0539">Nucleus</keyword>
<keyword id="KW-0597">Phosphoprotein</keyword>
<keyword id="KW-1185">Reference proteome</keyword>
<keyword id="KW-0804">Transcription</keyword>
<keyword id="KW-0805">Transcription regulation</keyword>
<keyword id="KW-0862">Zinc</keyword>
<keyword id="KW-0863">Zinc-finger</keyword>
<protein>
    <recommendedName>
        <fullName>Transcription elongation factor 1</fullName>
    </recommendedName>
</protein>
<comment type="function">
    <text evidence="5">Transcription elongation factor implicated in the maintenance of proper chromatin structure in actively transcribed regions.</text>
</comment>
<comment type="interaction">
    <interactant intactId="EBI-26919">
        <id>P36053</id>
    </interactant>
    <interactant intactId="EBI-32596">
        <id>Q06505</id>
        <label>SPN1</label>
    </interactant>
    <organismsDiffer>false</organismsDiffer>
    <experiments>2</experiments>
</comment>
<comment type="subcellular location">
    <subcellularLocation>
        <location evidence="3">Nucleus</location>
    </subcellularLocation>
</comment>
<comment type="miscellaneous">
    <text evidence="4">Present with 5860 molecules/cell in log phase SD medium.</text>
</comment>
<comment type="similarity">
    <text evidence="6">Belongs to the ELOF1 family.</text>
</comment>
<gene>
    <name type="primary">ELF1</name>
    <name type="ordered locus">YKL160W</name>
    <name type="ORF">YKL614</name>
</gene>
<sequence length="145" mass="16157">MGKRKKSTRKPTKRLVQKLDTKFNCLFCNHEKSVSCTLDKKNSIGTLSCKICGQSFQTRINSLSQPVDVYSDWFDAVEEVNSGRGSDTDDGDEGSDSDYESDSEQDAKTQNDGEIDSDEEEVDSDEERIGQVKRGRGALVDSDDE</sequence>
<reference key="1">
    <citation type="journal article" date="1994" name="Yeast">
        <title>DNA sequencing of a 36.2 kb fragment located between the FAS1 and LAP loci of chromosome XI of Saccharomyces cerevisiae.</title>
        <authorList>
            <person name="Vandenbol M."/>
            <person name="Bolle P.-A."/>
            <person name="Dion C."/>
            <person name="Portetelle D."/>
            <person name="Hilger F."/>
        </authorList>
    </citation>
    <scope>NUCLEOTIDE SEQUENCE [GENOMIC DNA]</scope>
    <source>
        <strain>ATCC 204508 / S288c</strain>
    </source>
</reference>
<reference key="2">
    <citation type="journal article" date="1994" name="Nature">
        <title>Complete DNA sequence of yeast chromosome XI.</title>
        <authorList>
            <person name="Dujon B."/>
            <person name="Alexandraki D."/>
            <person name="Andre B."/>
            <person name="Ansorge W."/>
            <person name="Baladron V."/>
            <person name="Ballesta J.P.G."/>
            <person name="Banrevi A."/>
            <person name="Bolle P.-A."/>
            <person name="Bolotin-Fukuhara M."/>
            <person name="Bossier P."/>
            <person name="Bou G."/>
            <person name="Boyer J."/>
            <person name="Buitrago M.J."/>
            <person name="Cheret G."/>
            <person name="Colleaux L."/>
            <person name="Daignan-Fornier B."/>
            <person name="del Rey F."/>
            <person name="Dion C."/>
            <person name="Domdey H."/>
            <person name="Duesterhoeft A."/>
            <person name="Duesterhus S."/>
            <person name="Entian K.-D."/>
            <person name="Erfle H."/>
            <person name="Esteban P.F."/>
            <person name="Feldmann H."/>
            <person name="Fernandes L."/>
            <person name="Fobo G.M."/>
            <person name="Fritz C."/>
            <person name="Fukuhara H."/>
            <person name="Gabel C."/>
            <person name="Gaillon L."/>
            <person name="Garcia-Cantalejo J.M."/>
            <person name="Garcia-Ramirez J.J."/>
            <person name="Gent M.E."/>
            <person name="Ghazvini M."/>
            <person name="Goffeau A."/>
            <person name="Gonzalez A."/>
            <person name="Grothues D."/>
            <person name="Guerreiro P."/>
            <person name="Hegemann J.H."/>
            <person name="Hewitt N."/>
            <person name="Hilger F."/>
            <person name="Hollenberg C.P."/>
            <person name="Horaitis O."/>
            <person name="Indge K.J."/>
            <person name="Jacquier A."/>
            <person name="James C.M."/>
            <person name="Jauniaux J.-C."/>
            <person name="Jimenez A."/>
            <person name="Keuchel H."/>
            <person name="Kirchrath L."/>
            <person name="Kleine K."/>
            <person name="Koetter P."/>
            <person name="Legrain P."/>
            <person name="Liebl S."/>
            <person name="Louis E.J."/>
            <person name="Maia e Silva A."/>
            <person name="Marck C."/>
            <person name="Monnier A.-L."/>
            <person name="Moestl D."/>
            <person name="Mueller S."/>
            <person name="Obermaier B."/>
            <person name="Oliver S.G."/>
            <person name="Pallier C."/>
            <person name="Pascolo S."/>
            <person name="Pfeiffer F."/>
            <person name="Philippsen P."/>
            <person name="Planta R.J."/>
            <person name="Pohl F.M."/>
            <person name="Pohl T.M."/>
            <person name="Poehlmann R."/>
            <person name="Portetelle D."/>
            <person name="Purnelle B."/>
            <person name="Puzos V."/>
            <person name="Ramezani Rad M."/>
            <person name="Rasmussen S.W."/>
            <person name="Remacha M.A."/>
            <person name="Revuelta J.L."/>
            <person name="Richard G.-F."/>
            <person name="Rieger M."/>
            <person name="Rodrigues-Pousada C."/>
            <person name="Rose M."/>
            <person name="Rupp T."/>
            <person name="Santos M.A."/>
            <person name="Schwager C."/>
            <person name="Sensen C."/>
            <person name="Skala J."/>
            <person name="Soares H."/>
            <person name="Sor F."/>
            <person name="Stegemann J."/>
            <person name="Tettelin H."/>
            <person name="Thierry A."/>
            <person name="Tzermia M."/>
            <person name="Urrestarazu L.A."/>
            <person name="van Dyck L."/>
            <person name="van Vliet-Reedijk J.C."/>
            <person name="Valens M."/>
            <person name="Vandenbol M."/>
            <person name="Vilela C."/>
            <person name="Vissers S."/>
            <person name="von Wettstein D."/>
            <person name="Voss H."/>
            <person name="Wiemann S."/>
            <person name="Xu G."/>
            <person name="Zimmermann J."/>
            <person name="Haasemann M."/>
            <person name="Becker I."/>
            <person name="Mewes H.-W."/>
        </authorList>
    </citation>
    <scope>NUCLEOTIDE SEQUENCE [LARGE SCALE GENOMIC DNA]</scope>
    <source>
        <strain>ATCC 204508 / S288c</strain>
    </source>
</reference>
<reference key="3">
    <citation type="journal article" date="2014" name="G3 (Bethesda)">
        <title>The reference genome sequence of Saccharomyces cerevisiae: Then and now.</title>
        <authorList>
            <person name="Engel S.R."/>
            <person name="Dietrich F.S."/>
            <person name="Fisk D.G."/>
            <person name="Binkley G."/>
            <person name="Balakrishnan R."/>
            <person name="Costanzo M.C."/>
            <person name="Dwight S.S."/>
            <person name="Hitz B.C."/>
            <person name="Karra K."/>
            <person name="Nash R.S."/>
            <person name="Weng S."/>
            <person name="Wong E.D."/>
            <person name="Lloyd P."/>
            <person name="Skrzypek M.S."/>
            <person name="Miyasato S.R."/>
            <person name="Simison M."/>
            <person name="Cherry J.M."/>
        </authorList>
    </citation>
    <scope>GENOME REANNOTATION</scope>
    <source>
        <strain>ATCC 204508 / S288c</strain>
    </source>
</reference>
<reference key="4">
    <citation type="journal article" date="2007" name="Genome Res.">
        <title>Approaching a complete repository of sequence-verified protein-encoding clones for Saccharomyces cerevisiae.</title>
        <authorList>
            <person name="Hu Y."/>
            <person name="Rolfs A."/>
            <person name="Bhullar B."/>
            <person name="Murthy T.V.S."/>
            <person name="Zhu C."/>
            <person name="Berger M.F."/>
            <person name="Camargo A.A."/>
            <person name="Kelley F."/>
            <person name="McCarron S."/>
            <person name="Jepson D."/>
            <person name="Richardson A."/>
            <person name="Raphael J."/>
            <person name="Moreira D."/>
            <person name="Taycher E."/>
            <person name="Zuo D."/>
            <person name="Mohr S."/>
            <person name="Kane M.F."/>
            <person name="Williamson J."/>
            <person name="Simpson A.J.G."/>
            <person name="Bulyk M.L."/>
            <person name="Harlow E."/>
            <person name="Marsischky G."/>
            <person name="Kolodner R.D."/>
            <person name="LaBaer J."/>
        </authorList>
    </citation>
    <scope>NUCLEOTIDE SEQUENCE [GENOMIC DNA]</scope>
    <source>
        <strain>ATCC 204508 / S288c</strain>
    </source>
</reference>
<reference key="5">
    <citation type="journal article" date="2003" name="Nature">
        <title>Global analysis of protein localization in budding yeast.</title>
        <authorList>
            <person name="Huh W.-K."/>
            <person name="Falvo J.V."/>
            <person name="Gerke L.C."/>
            <person name="Carroll A.S."/>
            <person name="Howson R.W."/>
            <person name="Weissman J.S."/>
            <person name="O'Shea E.K."/>
        </authorList>
    </citation>
    <scope>SUBCELLULAR LOCATION [LARGE SCALE ANALYSIS]</scope>
</reference>
<reference key="6">
    <citation type="journal article" date="2003" name="Nature">
        <title>Global analysis of protein expression in yeast.</title>
        <authorList>
            <person name="Ghaemmaghami S."/>
            <person name="Huh W.-K."/>
            <person name="Bower K."/>
            <person name="Howson R.W."/>
            <person name="Belle A."/>
            <person name="Dephoure N."/>
            <person name="O'Shea E.K."/>
            <person name="Weissman J.S."/>
        </authorList>
    </citation>
    <scope>LEVEL OF PROTEIN EXPRESSION [LARGE SCALE ANALYSIS]</scope>
</reference>
<reference key="7">
    <citation type="journal article" date="2005" name="Mol. Cell. Biol.">
        <title>Identification and characterization of Elf1, a conserved transcription elongation factor in Saccharomyces cerevisiae.</title>
        <authorList>
            <person name="Prather D."/>
            <person name="Krogan N.J."/>
            <person name="Emili A."/>
            <person name="Greenblatt J.F."/>
            <person name="Winston F."/>
        </authorList>
    </citation>
    <scope>FUNCTION</scope>
</reference>
<reference key="8">
    <citation type="journal article" date="2007" name="J. Proteome Res.">
        <title>Large-scale phosphorylation analysis of alpha-factor-arrested Saccharomyces cerevisiae.</title>
        <authorList>
            <person name="Li X."/>
            <person name="Gerber S.A."/>
            <person name="Rudner A.D."/>
            <person name="Beausoleil S.A."/>
            <person name="Haas W."/>
            <person name="Villen J."/>
            <person name="Elias J.E."/>
            <person name="Gygi S.P."/>
        </authorList>
    </citation>
    <scope>PHOSPHORYLATION [LARGE SCALE ANALYSIS] AT SER-117; SER-124 AND SER-142</scope>
    <scope>IDENTIFICATION BY MASS SPECTROMETRY [LARGE SCALE ANALYSIS]</scope>
    <source>
        <strain>ADR376</strain>
    </source>
</reference>
<reference key="9">
    <citation type="journal article" date="2008" name="Mol. Cell. Proteomics">
        <title>A multidimensional chromatography technology for in-depth phosphoproteome analysis.</title>
        <authorList>
            <person name="Albuquerque C.P."/>
            <person name="Smolka M.B."/>
            <person name="Payne S.H."/>
            <person name="Bafna V."/>
            <person name="Eng J."/>
            <person name="Zhou H."/>
        </authorList>
    </citation>
    <scope>PHOSPHORYLATION [LARGE SCALE ANALYSIS] AT SER-55; SER-117 AND SER-124</scope>
    <scope>IDENTIFICATION BY MASS SPECTROMETRY [LARGE SCALE ANALYSIS]</scope>
</reference>
<reference key="10">
    <citation type="journal article" date="2009" name="Science">
        <title>Global analysis of Cdk1 substrate phosphorylation sites provides insights into evolution.</title>
        <authorList>
            <person name="Holt L.J."/>
            <person name="Tuch B.B."/>
            <person name="Villen J."/>
            <person name="Johnson A.D."/>
            <person name="Gygi S.P."/>
            <person name="Morgan D.O."/>
        </authorList>
    </citation>
    <scope>PHOSPHORYLATION [LARGE SCALE ANALYSIS] AT SER-117; SER-124 AND SER-142</scope>
    <scope>IDENTIFICATION BY MASS SPECTROMETRY [LARGE SCALE ANALYSIS]</scope>
</reference>
<proteinExistence type="evidence at protein level"/>
<feature type="chain" id="PRO_0000120950" description="Transcription elongation factor 1">
    <location>
        <begin position="1"/>
        <end position="145"/>
    </location>
</feature>
<feature type="region of interest" description="Disordered" evidence="2">
    <location>
        <begin position="80"/>
        <end position="145"/>
    </location>
</feature>
<feature type="compositionally biased region" description="Acidic residues" evidence="2">
    <location>
        <begin position="88"/>
        <end position="104"/>
    </location>
</feature>
<feature type="compositionally biased region" description="Acidic residues" evidence="2">
    <location>
        <begin position="113"/>
        <end position="126"/>
    </location>
</feature>
<feature type="binding site" evidence="1">
    <location>
        <position position="25"/>
    </location>
    <ligand>
        <name>Zn(2+)</name>
        <dbReference type="ChEBI" id="CHEBI:29105"/>
    </ligand>
</feature>
<feature type="binding site" evidence="1">
    <location>
        <position position="28"/>
    </location>
    <ligand>
        <name>Zn(2+)</name>
        <dbReference type="ChEBI" id="CHEBI:29105"/>
    </ligand>
</feature>
<feature type="binding site" evidence="1">
    <location>
        <position position="49"/>
    </location>
    <ligand>
        <name>Zn(2+)</name>
        <dbReference type="ChEBI" id="CHEBI:29105"/>
    </ligand>
</feature>
<feature type="binding site" evidence="1">
    <location>
        <position position="52"/>
    </location>
    <ligand>
        <name>Zn(2+)</name>
        <dbReference type="ChEBI" id="CHEBI:29105"/>
    </ligand>
</feature>
<feature type="modified residue" description="Phosphoserine" evidence="8">
    <location>
        <position position="55"/>
    </location>
</feature>
<feature type="modified residue" description="Phosphoserine" evidence="7 8 9">
    <location>
        <position position="117"/>
    </location>
</feature>
<feature type="modified residue" description="Phosphoserine" evidence="7 8 9">
    <location>
        <position position="124"/>
    </location>
</feature>
<feature type="modified residue" description="Phosphoserine" evidence="7 9">
    <location>
        <position position="142"/>
    </location>
</feature>
<feature type="strand" evidence="10">
    <location>
        <begin position="26"/>
        <end position="28"/>
    </location>
</feature>
<feature type="strand" evidence="10">
    <location>
        <begin position="34"/>
        <end position="39"/>
    </location>
</feature>
<feature type="turn" evidence="10">
    <location>
        <begin position="40"/>
        <end position="43"/>
    </location>
</feature>
<feature type="strand" evidence="10">
    <location>
        <begin position="44"/>
        <end position="49"/>
    </location>
</feature>
<feature type="turn" evidence="10">
    <location>
        <begin position="50"/>
        <end position="52"/>
    </location>
</feature>
<feature type="strand" evidence="10">
    <location>
        <begin position="55"/>
        <end position="59"/>
    </location>
</feature>
<feature type="helix" evidence="10">
    <location>
        <begin position="66"/>
        <end position="82"/>
    </location>
</feature>
<name>ELF1_YEAST</name>
<evidence type="ECO:0000250" key="1">
    <source>
        <dbReference type="UniProtKB" id="P60003"/>
    </source>
</evidence>
<evidence type="ECO:0000256" key="2">
    <source>
        <dbReference type="SAM" id="MobiDB-lite"/>
    </source>
</evidence>
<evidence type="ECO:0000269" key="3">
    <source>
    </source>
</evidence>
<evidence type="ECO:0000269" key="4">
    <source>
    </source>
</evidence>
<evidence type="ECO:0000269" key="5">
    <source>
    </source>
</evidence>
<evidence type="ECO:0000305" key="6"/>
<evidence type="ECO:0007744" key="7">
    <source>
    </source>
</evidence>
<evidence type="ECO:0007744" key="8">
    <source>
    </source>
</evidence>
<evidence type="ECO:0007744" key="9">
    <source>
    </source>
</evidence>
<evidence type="ECO:0007829" key="10">
    <source>
        <dbReference type="PDB" id="8RAM"/>
    </source>
</evidence>
<accession>P36053</accession>
<accession>D6VX39</accession>